<protein>
    <recommendedName>
        <fullName evidence="1">Small ribosomal subunit protein uS17</fullName>
    </recommendedName>
    <alternativeName>
        <fullName evidence="2">30S ribosomal protein S17</fullName>
    </alternativeName>
</protein>
<accession>A5GIT6</accession>
<evidence type="ECO:0000255" key="1">
    <source>
        <dbReference type="HAMAP-Rule" id="MF_01345"/>
    </source>
</evidence>
<evidence type="ECO:0000305" key="2"/>
<keyword id="KW-1185">Reference proteome</keyword>
<keyword id="KW-0687">Ribonucleoprotein</keyword>
<keyword id="KW-0689">Ribosomal protein</keyword>
<keyword id="KW-0694">RNA-binding</keyword>
<keyword id="KW-0699">rRNA-binding</keyword>
<name>RS17_SYNPW</name>
<dbReference type="EMBL" id="CT971583">
    <property type="protein sequence ID" value="CAK22851.1"/>
    <property type="molecule type" value="Genomic_DNA"/>
</dbReference>
<dbReference type="SMR" id="A5GIT6"/>
<dbReference type="STRING" id="32051.SynWH7803_0425"/>
<dbReference type="KEGG" id="syx:SynWH7803_0425"/>
<dbReference type="eggNOG" id="COG0186">
    <property type="taxonomic scope" value="Bacteria"/>
</dbReference>
<dbReference type="HOGENOM" id="CLU_073626_1_2_3"/>
<dbReference type="OrthoDB" id="9811714at2"/>
<dbReference type="Proteomes" id="UP000001566">
    <property type="component" value="Chromosome"/>
</dbReference>
<dbReference type="GO" id="GO:0022627">
    <property type="term" value="C:cytosolic small ribosomal subunit"/>
    <property type="evidence" value="ECO:0007669"/>
    <property type="project" value="TreeGrafter"/>
</dbReference>
<dbReference type="GO" id="GO:0019843">
    <property type="term" value="F:rRNA binding"/>
    <property type="evidence" value="ECO:0007669"/>
    <property type="project" value="UniProtKB-UniRule"/>
</dbReference>
<dbReference type="GO" id="GO:0003735">
    <property type="term" value="F:structural constituent of ribosome"/>
    <property type="evidence" value="ECO:0007669"/>
    <property type="project" value="InterPro"/>
</dbReference>
<dbReference type="GO" id="GO:0006412">
    <property type="term" value="P:translation"/>
    <property type="evidence" value="ECO:0007669"/>
    <property type="project" value="UniProtKB-UniRule"/>
</dbReference>
<dbReference type="CDD" id="cd00364">
    <property type="entry name" value="Ribosomal_uS17"/>
    <property type="match status" value="1"/>
</dbReference>
<dbReference type="Gene3D" id="2.40.50.140">
    <property type="entry name" value="Nucleic acid-binding proteins"/>
    <property type="match status" value="1"/>
</dbReference>
<dbReference type="HAMAP" id="MF_01345_B">
    <property type="entry name" value="Ribosomal_uS17_B"/>
    <property type="match status" value="1"/>
</dbReference>
<dbReference type="InterPro" id="IPR012340">
    <property type="entry name" value="NA-bd_OB-fold"/>
</dbReference>
<dbReference type="InterPro" id="IPR000266">
    <property type="entry name" value="Ribosomal_uS17"/>
</dbReference>
<dbReference type="InterPro" id="IPR019984">
    <property type="entry name" value="Ribosomal_uS17_bact/chlr"/>
</dbReference>
<dbReference type="InterPro" id="IPR019979">
    <property type="entry name" value="Ribosomal_uS17_CS"/>
</dbReference>
<dbReference type="NCBIfam" id="NF004123">
    <property type="entry name" value="PRK05610.1"/>
    <property type="match status" value="1"/>
</dbReference>
<dbReference type="NCBIfam" id="TIGR03635">
    <property type="entry name" value="uS17_bact"/>
    <property type="match status" value="1"/>
</dbReference>
<dbReference type="PANTHER" id="PTHR10744">
    <property type="entry name" value="40S RIBOSOMAL PROTEIN S11 FAMILY MEMBER"/>
    <property type="match status" value="1"/>
</dbReference>
<dbReference type="PANTHER" id="PTHR10744:SF1">
    <property type="entry name" value="SMALL RIBOSOMAL SUBUNIT PROTEIN US17M"/>
    <property type="match status" value="1"/>
</dbReference>
<dbReference type="Pfam" id="PF00366">
    <property type="entry name" value="Ribosomal_S17"/>
    <property type="match status" value="1"/>
</dbReference>
<dbReference type="PRINTS" id="PR00973">
    <property type="entry name" value="RIBOSOMALS17"/>
</dbReference>
<dbReference type="SUPFAM" id="SSF50249">
    <property type="entry name" value="Nucleic acid-binding proteins"/>
    <property type="match status" value="1"/>
</dbReference>
<dbReference type="PROSITE" id="PS00056">
    <property type="entry name" value="RIBOSOMAL_S17"/>
    <property type="match status" value="1"/>
</dbReference>
<organism>
    <name type="scientific">Synechococcus sp. (strain WH7803)</name>
    <dbReference type="NCBI Taxonomy" id="32051"/>
    <lineage>
        <taxon>Bacteria</taxon>
        <taxon>Bacillati</taxon>
        <taxon>Cyanobacteriota</taxon>
        <taxon>Cyanophyceae</taxon>
        <taxon>Synechococcales</taxon>
        <taxon>Synechococcaceae</taxon>
        <taxon>Synechococcus</taxon>
    </lineage>
</organism>
<reference key="1">
    <citation type="submission" date="2006-05" db="EMBL/GenBank/DDBJ databases">
        <authorList>
            <consortium name="Genoscope"/>
        </authorList>
    </citation>
    <scope>NUCLEOTIDE SEQUENCE [LARGE SCALE GENOMIC DNA]</scope>
    <source>
        <strain>WH7803</strain>
    </source>
</reference>
<sequence>MALKERVGTVVSDKMDKTVVVAVENRFPHPIYQKTVSRTTRYKAHDENNSVRVGDRVRITETRPLSRHKRWAVAEVLSHSPKAEEAKK</sequence>
<proteinExistence type="inferred from homology"/>
<gene>
    <name evidence="1" type="primary">rpsQ</name>
    <name evidence="1" type="synonym">rps17</name>
    <name type="ordered locus">SynWH7803_0425</name>
</gene>
<comment type="function">
    <text evidence="1">One of the primary rRNA binding proteins, it binds specifically to the 5'-end of 16S ribosomal RNA.</text>
</comment>
<comment type="subunit">
    <text evidence="1">Part of the 30S ribosomal subunit.</text>
</comment>
<comment type="similarity">
    <text evidence="1">Belongs to the universal ribosomal protein uS17 family.</text>
</comment>
<feature type="chain" id="PRO_1000055037" description="Small ribosomal subunit protein uS17">
    <location>
        <begin position="1"/>
        <end position="88"/>
    </location>
</feature>